<reference key="1">
    <citation type="submission" date="2006-01" db="EMBL/GenBank/DDBJ databases">
        <authorList>
            <consortium name="NIH - Mammalian Gene Collection (MGC) project"/>
        </authorList>
    </citation>
    <scope>NUCLEOTIDE SEQUENCE [LARGE SCALE MRNA]</scope>
    <source>
        <strain>Hereford</strain>
        <tissue>Testis</tissue>
    </source>
</reference>
<proteinExistence type="evidence at transcript level"/>
<comment type="function">
    <text evidence="1">Acts as a lysosomal membrane arginine sensor (By similarity). Forms a complex with MTOR and SLC38A9 on lysosomal membranes in an arginine-regulated manner, leading to arginine efflux which enables the activation of mTORC1 which subsequently leads to RPS6KB1 and EIF4EBP1 phosphorylations (By similarity). Facilitates cell cycle G1/S phase progression and the translocation of the CDK4-CCND1 complex into the nucleus (By similarity). CDKN1B and RHOA/ROCK signaling activity are involved in TM4SF5-mediated acceleration of G1/S phase progression (By similarity).</text>
</comment>
<comment type="subunit">
    <text evidence="1">Interacts with MTOR; the interaction is positively regulated by arginine and is negatively regulated by leucine (By similarity). Interacts with SLC38A9 (By similarity). Interacts with SLC7A1; the interaction is negatively regulated by arginine (By similarity). Interacts with CASTOR1; the interaction is positively regulated by leucine and is negatively regulated by arginine (By similarity).</text>
</comment>
<comment type="subcellular location">
    <subcellularLocation>
        <location evidence="1">Lysosome membrane</location>
        <topology evidence="2">Multi-pass membrane protein</topology>
    </subcellularLocation>
    <subcellularLocation>
        <location evidence="1">Cell membrane</location>
        <topology evidence="2">Multi-pass membrane protein</topology>
    </subcellularLocation>
    <text evidence="1">Localization to cell membrane increases during conditions of arginine depletion and translocation to lysosome membrane seen upon arginine repletion.</text>
</comment>
<comment type="similarity">
    <text evidence="3">Belongs to the L6 tetraspanin family.</text>
</comment>
<evidence type="ECO:0000250" key="1">
    <source>
        <dbReference type="UniProtKB" id="O14894"/>
    </source>
</evidence>
<evidence type="ECO:0000255" key="2"/>
<evidence type="ECO:0000305" key="3"/>
<accession>Q2KIG8</accession>
<feature type="chain" id="PRO_0000285210" description="Transmembrane 4 L6 family member 5">
    <location>
        <begin position="1"/>
        <end position="196"/>
    </location>
</feature>
<feature type="topological domain" description="Cytoplasmic" evidence="2">
    <location>
        <begin position="1"/>
        <end position="9"/>
    </location>
</feature>
<feature type="transmembrane region" description="Helical" evidence="2">
    <location>
        <begin position="10"/>
        <end position="30"/>
    </location>
</feature>
<feature type="topological domain" description="Extracellular" evidence="2">
    <location>
        <begin position="31"/>
        <end position="45"/>
    </location>
</feature>
<feature type="transmembrane region" description="Helical" evidence="2">
    <location>
        <begin position="46"/>
        <end position="66"/>
    </location>
</feature>
<feature type="topological domain" description="Cytoplasmic" evidence="2">
    <location>
        <begin position="67"/>
        <end position="89"/>
    </location>
</feature>
<feature type="transmembrane region" description="Helical" evidence="2">
    <location>
        <begin position="90"/>
        <end position="110"/>
    </location>
</feature>
<feature type="topological domain" description="Extracellular" evidence="2">
    <location>
        <begin position="111"/>
        <end position="156"/>
    </location>
</feature>
<feature type="transmembrane region" description="Helical" evidence="2">
    <location>
        <begin position="157"/>
        <end position="177"/>
    </location>
</feature>
<feature type="topological domain" description="Cytoplasmic" evidence="2">
    <location>
        <begin position="178"/>
        <end position="196"/>
    </location>
</feature>
<feature type="region of interest" description="Interaction with MTOR and CASTOR1" evidence="1">
    <location>
        <begin position="90"/>
        <end position="196"/>
    </location>
</feature>
<feature type="binding site" evidence="1">
    <location>
        <begin position="123"/>
        <end position="128"/>
    </location>
    <ligand>
        <name>L-arginine</name>
        <dbReference type="ChEBI" id="CHEBI:32682"/>
    </ligand>
</feature>
<feature type="glycosylation site" description="N-linked (GlcNAc...) asparagine" evidence="2">
    <location>
        <position position="120"/>
    </location>
</feature>
<feature type="glycosylation site" description="N-linked (GlcNAc...) asparagine" evidence="2">
    <location>
        <position position="137"/>
    </location>
</feature>
<feature type="glycosylation site" description="N-linked (GlcNAc...) asparagine" evidence="2">
    <location>
        <position position="154"/>
    </location>
</feature>
<sequence length="196" mass="20652">MCTGKCARFVGLSLIPLSLVCIVANALLLVPNGQTTWTKDHLSLQVWLMAGFVGGGLMVLCPGISAVRAGGKGCCGAGCCGNRCRMLRSVFCSAIGLLGAIYCLSVSGTGLRIGPQCLMNGSWDYHFQDTAGSYLLNRTQWNLCVEPPDVVLWNVTLFSLLVAASCLEILLCGVQLVNASIGVLCGDCRKKQGSSQ</sequence>
<organism>
    <name type="scientific">Bos taurus</name>
    <name type="common">Bovine</name>
    <dbReference type="NCBI Taxonomy" id="9913"/>
    <lineage>
        <taxon>Eukaryota</taxon>
        <taxon>Metazoa</taxon>
        <taxon>Chordata</taxon>
        <taxon>Craniata</taxon>
        <taxon>Vertebrata</taxon>
        <taxon>Euteleostomi</taxon>
        <taxon>Mammalia</taxon>
        <taxon>Eutheria</taxon>
        <taxon>Laurasiatheria</taxon>
        <taxon>Artiodactyla</taxon>
        <taxon>Ruminantia</taxon>
        <taxon>Pecora</taxon>
        <taxon>Bovidae</taxon>
        <taxon>Bovinae</taxon>
        <taxon>Bos</taxon>
    </lineage>
</organism>
<gene>
    <name type="primary">TM4SF5</name>
</gene>
<keyword id="KW-1003">Cell membrane</keyword>
<keyword id="KW-0325">Glycoprotein</keyword>
<keyword id="KW-0458">Lysosome</keyword>
<keyword id="KW-0472">Membrane</keyword>
<keyword id="KW-1185">Reference proteome</keyword>
<keyword id="KW-0812">Transmembrane</keyword>
<keyword id="KW-1133">Transmembrane helix</keyword>
<name>T4S5_BOVIN</name>
<protein>
    <recommendedName>
        <fullName>Transmembrane 4 L6 family member 5</fullName>
    </recommendedName>
</protein>
<dbReference type="EMBL" id="BC112643">
    <property type="protein sequence ID" value="AAI12644.1"/>
    <property type="molecule type" value="mRNA"/>
</dbReference>
<dbReference type="RefSeq" id="NP_001039567.1">
    <property type="nucleotide sequence ID" value="NM_001046102.2"/>
</dbReference>
<dbReference type="FunCoup" id="Q2KIG8">
    <property type="interactions" value="68"/>
</dbReference>
<dbReference type="STRING" id="9913.ENSBTAP00000062342"/>
<dbReference type="GlyCosmos" id="Q2KIG8">
    <property type="glycosylation" value="3 sites, No reported glycans"/>
</dbReference>
<dbReference type="GlyGen" id="Q2KIG8">
    <property type="glycosylation" value="3 sites"/>
</dbReference>
<dbReference type="PaxDb" id="9913-ENSBTAP00000004861"/>
<dbReference type="GeneID" id="511869"/>
<dbReference type="KEGG" id="bta:511869"/>
<dbReference type="CTD" id="9032"/>
<dbReference type="VEuPathDB" id="HostDB:ENSBTAG00000003733"/>
<dbReference type="eggNOG" id="ENOG502RBE1">
    <property type="taxonomic scope" value="Eukaryota"/>
</dbReference>
<dbReference type="HOGENOM" id="CLU_087168_1_0_1"/>
<dbReference type="InParanoid" id="Q2KIG8"/>
<dbReference type="OMA" id="MVLCGIQ"/>
<dbReference type="OrthoDB" id="9450608at2759"/>
<dbReference type="TreeFam" id="TF331371"/>
<dbReference type="Proteomes" id="UP000009136">
    <property type="component" value="Chromosome 19"/>
</dbReference>
<dbReference type="Bgee" id="ENSBTAG00000003733">
    <property type="expression patterns" value="Expressed in liver and 96 other cell types or tissues"/>
</dbReference>
<dbReference type="GO" id="GO:0005765">
    <property type="term" value="C:lysosomal membrane"/>
    <property type="evidence" value="ECO:0000250"/>
    <property type="project" value="UniProtKB"/>
</dbReference>
<dbReference type="GO" id="GO:0016020">
    <property type="term" value="C:membrane"/>
    <property type="evidence" value="ECO:0000318"/>
    <property type="project" value="GO_Central"/>
</dbReference>
<dbReference type="GO" id="GO:0005886">
    <property type="term" value="C:plasma membrane"/>
    <property type="evidence" value="ECO:0000250"/>
    <property type="project" value="UniProtKB"/>
</dbReference>
<dbReference type="GO" id="GO:0034618">
    <property type="term" value="F:arginine binding"/>
    <property type="evidence" value="ECO:0000250"/>
    <property type="project" value="UniProtKB"/>
</dbReference>
<dbReference type="GO" id="GO:2000045">
    <property type="term" value="P:regulation of G1/S transition of mitotic cell cycle"/>
    <property type="evidence" value="ECO:0000250"/>
    <property type="project" value="UniProtKB"/>
</dbReference>
<dbReference type="InterPro" id="IPR008661">
    <property type="entry name" value="L6_membrane"/>
</dbReference>
<dbReference type="PANTHER" id="PTHR14198">
    <property type="entry name" value="TRANSMEMBRANE 4 L6 FAMILY MEMBER 1-RELATED"/>
    <property type="match status" value="1"/>
</dbReference>
<dbReference type="PANTHER" id="PTHR14198:SF4">
    <property type="entry name" value="TRANSMEMBRANE 4 L6 FAMILY MEMBER 5"/>
    <property type="match status" value="1"/>
</dbReference>
<dbReference type="Pfam" id="PF05805">
    <property type="entry name" value="L6_membrane"/>
    <property type="match status" value="1"/>
</dbReference>